<keyword id="KW-1015">Disulfide bond</keyword>
<keyword id="KW-0872">Ion channel impairing toxin</keyword>
<keyword id="KW-0528">Neurotoxin</keyword>
<keyword id="KW-0964">Secreted</keyword>
<keyword id="KW-0732">Signal</keyword>
<keyword id="KW-0800">Toxin</keyword>
<proteinExistence type="evidence at transcript level"/>
<name>SCXC_ANDAU</name>
<organism>
    <name type="scientific">Androctonus australis</name>
    <name type="common">Sahara scorpion</name>
    <dbReference type="NCBI Taxonomy" id="6858"/>
    <lineage>
        <taxon>Eukaryota</taxon>
        <taxon>Metazoa</taxon>
        <taxon>Ecdysozoa</taxon>
        <taxon>Arthropoda</taxon>
        <taxon>Chelicerata</taxon>
        <taxon>Arachnida</taxon>
        <taxon>Scorpiones</taxon>
        <taxon>Buthida</taxon>
        <taxon>Buthoidea</taxon>
        <taxon>Buthidae</taxon>
        <taxon>Androctonus</taxon>
    </lineage>
</organism>
<dbReference type="EMBL" id="AJ308444">
    <property type="protein sequence ID" value="CAC37325.1"/>
    <property type="molecule type" value="mRNA"/>
</dbReference>
<dbReference type="SMR" id="Q9BLM0"/>
<dbReference type="GO" id="GO:0005576">
    <property type="term" value="C:extracellular region"/>
    <property type="evidence" value="ECO:0007669"/>
    <property type="project" value="UniProtKB-SubCell"/>
</dbReference>
<dbReference type="GO" id="GO:0019871">
    <property type="term" value="F:sodium channel inhibitor activity"/>
    <property type="evidence" value="ECO:0007669"/>
    <property type="project" value="InterPro"/>
</dbReference>
<dbReference type="GO" id="GO:0090729">
    <property type="term" value="F:toxin activity"/>
    <property type="evidence" value="ECO:0007669"/>
    <property type="project" value="UniProtKB-KW"/>
</dbReference>
<dbReference type="GO" id="GO:0006952">
    <property type="term" value="P:defense response"/>
    <property type="evidence" value="ECO:0007669"/>
    <property type="project" value="InterPro"/>
</dbReference>
<dbReference type="CDD" id="cd23106">
    <property type="entry name" value="neurotoxins_LC_scorpion"/>
    <property type="match status" value="1"/>
</dbReference>
<dbReference type="Gene3D" id="3.30.30.10">
    <property type="entry name" value="Knottin, scorpion toxin-like"/>
    <property type="match status" value="1"/>
</dbReference>
<dbReference type="InterPro" id="IPR044062">
    <property type="entry name" value="LCN-type_CS_alpha_beta_dom"/>
</dbReference>
<dbReference type="InterPro" id="IPR003614">
    <property type="entry name" value="Scorpion_toxin-like"/>
</dbReference>
<dbReference type="InterPro" id="IPR036574">
    <property type="entry name" value="Scorpion_toxin-like_sf"/>
</dbReference>
<dbReference type="InterPro" id="IPR002061">
    <property type="entry name" value="Scorpion_toxinL/defensin"/>
</dbReference>
<dbReference type="Pfam" id="PF00537">
    <property type="entry name" value="Toxin_3"/>
    <property type="match status" value="1"/>
</dbReference>
<dbReference type="SMART" id="SM00505">
    <property type="entry name" value="Knot1"/>
    <property type="match status" value="1"/>
</dbReference>
<dbReference type="SUPFAM" id="SSF57095">
    <property type="entry name" value="Scorpion toxin-like"/>
    <property type="match status" value="1"/>
</dbReference>
<dbReference type="PROSITE" id="PS51863">
    <property type="entry name" value="LCN_CSAB"/>
    <property type="match status" value="1"/>
</dbReference>
<reference key="1">
    <citation type="journal article" date="2001" name="FEBS Lett.">
        <title>Evidence for a position-specific deletion as an evolutionary link between long- and short-chain scorpion toxins.</title>
        <authorList>
            <person name="Ceard B."/>
            <person name="Martin-Eauclaire M.-F."/>
            <person name="Bougis P.E."/>
        </authorList>
    </citation>
    <scope>NUCLEOTIDE SEQUENCE [MRNA]</scope>
    <source>
        <strain>Hector</strain>
    </source>
</reference>
<comment type="subcellular location">
    <subcellularLocation>
        <location evidence="3">Secreted</location>
    </subcellularLocation>
</comment>
<comment type="tissue specificity">
    <text>Expressed by the venom gland.</text>
</comment>
<comment type="domain">
    <text evidence="3">Has the structural arrangement of an alpha-helix connected to antiparallel beta-sheets by disulfide bonds (CS-alpha/beta).</text>
</comment>
<comment type="similarity">
    <text evidence="3">Belongs to the long (3 C-C) scorpion toxin superfamily.</text>
</comment>
<protein>
    <recommendedName>
        <fullName>Probable neurotoxin pcD-993</fullName>
    </recommendedName>
</protein>
<sequence>MNYLVMISFALLLVIGVESVRDGYFVEPDNCVVHCMPSSEMCDRGCKHNGATSGSCKAFSKGGNACWCKGLR</sequence>
<evidence type="ECO:0000250" key="1"/>
<evidence type="ECO:0000255" key="2">
    <source>
        <dbReference type="PROSITE-ProRule" id="PRU01210"/>
    </source>
</evidence>
<evidence type="ECO:0000305" key="3"/>
<accession>Q9BLM0</accession>
<feature type="signal peptide" evidence="1">
    <location>
        <begin position="1"/>
        <end position="19"/>
    </location>
</feature>
<feature type="chain" id="PRO_0000035227" description="Probable neurotoxin pcD-993">
    <location>
        <begin position="20"/>
        <end position="71"/>
    </location>
</feature>
<feature type="propeptide" id="PRO_0000035228" description="Removed by a carboxypeptidase" evidence="3">
    <location>
        <position position="72"/>
    </location>
</feature>
<feature type="domain" description="LCN-type CS-alpha/beta" evidence="2">
    <location>
        <begin position="21"/>
        <end position="72"/>
    </location>
</feature>
<feature type="disulfide bond" evidence="2">
    <location>
        <begin position="35"/>
        <end position="56"/>
    </location>
</feature>
<feature type="disulfide bond" evidence="2">
    <location>
        <begin position="42"/>
        <end position="66"/>
    </location>
</feature>
<feature type="disulfide bond" evidence="2">
    <location>
        <begin position="46"/>
        <end position="68"/>
    </location>
</feature>